<sequence>MDIQLINIGFGNIVSANRVIAIVSPESAPIKRIISDARERGQLIDATYGRRTRAVIITDSSHVVLSAIQPETVAHRFVVNKEVQANSN</sequence>
<reference key="1">
    <citation type="journal article" date="2011" name="MBio">
        <title>Novel metabolic attributes of the genus Cyanothece, comprising a group of unicellular nitrogen-fixing Cyanobacteria.</title>
        <authorList>
            <person name="Bandyopadhyay A."/>
            <person name="Elvitigala T."/>
            <person name="Welsh E."/>
            <person name="Stockel J."/>
            <person name="Liberton M."/>
            <person name="Min H."/>
            <person name="Sherman L.A."/>
            <person name="Pakrasi H.B."/>
        </authorList>
    </citation>
    <scope>NUCLEOTIDE SEQUENCE [LARGE SCALE GENOMIC DNA]</scope>
    <source>
        <strain>PCC 7424</strain>
    </source>
</reference>
<protein>
    <recommendedName>
        <fullName evidence="1">Putative regulatory protein PCC7424_3427</fullName>
    </recommendedName>
</protein>
<comment type="similarity">
    <text evidence="1">Belongs to the RemA family.</text>
</comment>
<name>Y3427_GLOC7</name>
<feature type="chain" id="PRO_1000198219" description="Putative regulatory protein PCC7424_3427">
    <location>
        <begin position="1"/>
        <end position="88"/>
    </location>
</feature>
<proteinExistence type="inferred from homology"/>
<accession>B7KFA6</accession>
<evidence type="ECO:0000255" key="1">
    <source>
        <dbReference type="HAMAP-Rule" id="MF_01503"/>
    </source>
</evidence>
<organism>
    <name type="scientific">Gloeothece citriformis (strain PCC 7424)</name>
    <name type="common">Cyanothece sp. (strain PCC 7424)</name>
    <dbReference type="NCBI Taxonomy" id="65393"/>
    <lineage>
        <taxon>Bacteria</taxon>
        <taxon>Bacillati</taxon>
        <taxon>Cyanobacteriota</taxon>
        <taxon>Cyanophyceae</taxon>
        <taxon>Oscillatoriophycideae</taxon>
        <taxon>Chroococcales</taxon>
        <taxon>Aphanothecaceae</taxon>
        <taxon>Gloeothece</taxon>
        <taxon>Gloeothece citriformis</taxon>
    </lineage>
</organism>
<gene>
    <name type="ordered locus">PCC7424_3427</name>
</gene>
<dbReference type="EMBL" id="CP001291">
    <property type="protein sequence ID" value="ACK71822.1"/>
    <property type="molecule type" value="Genomic_DNA"/>
</dbReference>
<dbReference type="RefSeq" id="WP_015955417.1">
    <property type="nucleotide sequence ID" value="NC_011729.1"/>
</dbReference>
<dbReference type="SMR" id="B7KFA6"/>
<dbReference type="STRING" id="65393.PCC7424_3427"/>
<dbReference type="KEGG" id="cyc:PCC7424_3427"/>
<dbReference type="eggNOG" id="COG2052">
    <property type="taxonomic scope" value="Bacteria"/>
</dbReference>
<dbReference type="HOGENOM" id="CLU_165326_0_0_3"/>
<dbReference type="OrthoDB" id="5432174at2"/>
<dbReference type="Proteomes" id="UP000002384">
    <property type="component" value="Chromosome"/>
</dbReference>
<dbReference type="HAMAP" id="MF_01503">
    <property type="entry name" value="RemA"/>
    <property type="match status" value="1"/>
</dbReference>
<dbReference type="InterPro" id="IPR007169">
    <property type="entry name" value="RemA-like"/>
</dbReference>
<dbReference type="NCBIfam" id="NF046064">
    <property type="entry name" value="MtxBflmRegRemA"/>
    <property type="match status" value="1"/>
</dbReference>
<dbReference type="NCBIfam" id="NF003315">
    <property type="entry name" value="PRK04323.1"/>
    <property type="match status" value="1"/>
</dbReference>
<dbReference type="PANTHER" id="PTHR38449:SF1">
    <property type="entry name" value="REGULATORY PROTEIN SSL2874-RELATED"/>
    <property type="match status" value="1"/>
</dbReference>
<dbReference type="PANTHER" id="PTHR38449">
    <property type="entry name" value="REGULATORY PROTEIN TM_1690-RELATED"/>
    <property type="match status" value="1"/>
</dbReference>
<dbReference type="Pfam" id="PF04025">
    <property type="entry name" value="RemA-like"/>
    <property type="match status" value="1"/>
</dbReference>
<keyword id="KW-1185">Reference proteome</keyword>